<dbReference type="EC" id="2.7.2.3" evidence="1"/>
<dbReference type="EMBL" id="AE014291">
    <property type="protein sequence ID" value="AAN30628.1"/>
    <property type="molecule type" value="Genomic_DNA"/>
</dbReference>
<dbReference type="EMBL" id="CP002997">
    <property type="protein sequence ID" value="AEM19045.1"/>
    <property type="molecule type" value="Genomic_DNA"/>
</dbReference>
<dbReference type="SMR" id="Q8FYX8"/>
<dbReference type="KEGG" id="bms:BR1729"/>
<dbReference type="KEGG" id="bsi:BS1330_I1723"/>
<dbReference type="HOGENOM" id="CLU_025427_0_2_5"/>
<dbReference type="PhylomeDB" id="Q8FYX8"/>
<dbReference type="UniPathway" id="UPA00109">
    <property type="reaction ID" value="UER00185"/>
</dbReference>
<dbReference type="Proteomes" id="UP000007104">
    <property type="component" value="Chromosome I"/>
</dbReference>
<dbReference type="GO" id="GO:0005829">
    <property type="term" value="C:cytosol"/>
    <property type="evidence" value="ECO:0007669"/>
    <property type="project" value="TreeGrafter"/>
</dbReference>
<dbReference type="GO" id="GO:0043531">
    <property type="term" value="F:ADP binding"/>
    <property type="evidence" value="ECO:0007669"/>
    <property type="project" value="TreeGrafter"/>
</dbReference>
<dbReference type="GO" id="GO:0005524">
    <property type="term" value="F:ATP binding"/>
    <property type="evidence" value="ECO:0007669"/>
    <property type="project" value="UniProtKB-KW"/>
</dbReference>
<dbReference type="GO" id="GO:0004618">
    <property type="term" value="F:phosphoglycerate kinase activity"/>
    <property type="evidence" value="ECO:0007669"/>
    <property type="project" value="UniProtKB-UniRule"/>
</dbReference>
<dbReference type="GO" id="GO:0006094">
    <property type="term" value="P:gluconeogenesis"/>
    <property type="evidence" value="ECO:0007669"/>
    <property type="project" value="TreeGrafter"/>
</dbReference>
<dbReference type="GO" id="GO:0006096">
    <property type="term" value="P:glycolytic process"/>
    <property type="evidence" value="ECO:0007669"/>
    <property type="project" value="UniProtKB-UniRule"/>
</dbReference>
<dbReference type="FunFam" id="3.40.50.1260:FF:000006">
    <property type="entry name" value="Phosphoglycerate kinase"/>
    <property type="match status" value="1"/>
</dbReference>
<dbReference type="FunFam" id="3.40.50.1260:FF:000031">
    <property type="entry name" value="Phosphoglycerate kinase 1"/>
    <property type="match status" value="1"/>
</dbReference>
<dbReference type="Gene3D" id="3.40.50.1260">
    <property type="entry name" value="Phosphoglycerate kinase, N-terminal domain"/>
    <property type="match status" value="2"/>
</dbReference>
<dbReference type="HAMAP" id="MF_00145">
    <property type="entry name" value="Phosphoglyc_kinase"/>
    <property type="match status" value="1"/>
</dbReference>
<dbReference type="InterPro" id="IPR001576">
    <property type="entry name" value="Phosphoglycerate_kinase"/>
</dbReference>
<dbReference type="InterPro" id="IPR015911">
    <property type="entry name" value="Phosphoglycerate_kinase_CS"/>
</dbReference>
<dbReference type="InterPro" id="IPR015824">
    <property type="entry name" value="Phosphoglycerate_kinase_N"/>
</dbReference>
<dbReference type="InterPro" id="IPR036043">
    <property type="entry name" value="Phosphoglycerate_kinase_sf"/>
</dbReference>
<dbReference type="PANTHER" id="PTHR11406">
    <property type="entry name" value="PHOSPHOGLYCERATE KINASE"/>
    <property type="match status" value="1"/>
</dbReference>
<dbReference type="PANTHER" id="PTHR11406:SF23">
    <property type="entry name" value="PHOSPHOGLYCERATE KINASE 1, CHLOROPLASTIC-RELATED"/>
    <property type="match status" value="1"/>
</dbReference>
<dbReference type="Pfam" id="PF00162">
    <property type="entry name" value="PGK"/>
    <property type="match status" value="1"/>
</dbReference>
<dbReference type="PIRSF" id="PIRSF000724">
    <property type="entry name" value="Pgk"/>
    <property type="match status" value="1"/>
</dbReference>
<dbReference type="PRINTS" id="PR00477">
    <property type="entry name" value="PHGLYCKINASE"/>
</dbReference>
<dbReference type="SUPFAM" id="SSF53748">
    <property type="entry name" value="Phosphoglycerate kinase"/>
    <property type="match status" value="1"/>
</dbReference>
<dbReference type="PROSITE" id="PS00111">
    <property type="entry name" value="PGLYCERATE_KINASE"/>
    <property type="match status" value="1"/>
</dbReference>
<comment type="catalytic activity">
    <reaction evidence="1">
        <text>(2R)-3-phosphoglycerate + ATP = (2R)-3-phospho-glyceroyl phosphate + ADP</text>
        <dbReference type="Rhea" id="RHEA:14801"/>
        <dbReference type="ChEBI" id="CHEBI:30616"/>
        <dbReference type="ChEBI" id="CHEBI:57604"/>
        <dbReference type="ChEBI" id="CHEBI:58272"/>
        <dbReference type="ChEBI" id="CHEBI:456216"/>
        <dbReference type="EC" id="2.7.2.3"/>
    </reaction>
</comment>
<comment type="pathway">
    <text evidence="1">Carbohydrate degradation; glycolysis; pyruvate from D-glyceraldehyde 3-phosphate: step 2/5.</text>
</comment>
<comment type="subunit">
    <text evidence="1">Monomer.</text>
</comment>
<comment type="subcellular location">
    <subcellularLocation>
        <location evidence="1">Cytoplasm</location>
    </subcellularLocation>
</comment>
<comment type="similarity">
    <text evidence="1">Belongs to the phosphoglycerate kinase family.</text>
</comment>
<evidence type="ECO:0000255" key="1">
    <source>
        <dbReference type="HAMAP-Rule" id="MF_00145"/>
    </source>
</evidence>
<accession>Q8FYX8</accession>
<accession>G0K6Z0</accession>
<organism>
    <name type="scientific">Brucella suis biovar 1 (strain 1330)</name>
    <dbReference type="NCBI Taxonomy" id="204722"/>
    <lineage>
        <taxon>Bacteria</taxon>
        <taxon>Pseudomonadati</taxon>
        <taxon>Pseudomonadota</taxon>
        <taxon>Alphaproteobacteria</taxon>
        <taxon>Hyphomicrobiales</taxon>
        <taxon>Brucellaceae</taxon>
        <taxon>Brucella/Ochrobactrum group</taxon>
        <taxon>Brucella</taxon>
    </lineage>
</organism>
<reference key="1">
    <citation type="journal article" date="2002" name="Proc. Natl. Acad. Sci. U.S.A.">
        <title>The Brucella suis genome reveals fundamental similarities between animal and plant pathogens and symbionts.</title>
        <authorList>
            <person name="Paulsen I.T."/>
            <person name="Seshadri R."/>
            <person name="Nelson K.E."/>
            <person name="Eisen J.A."/>
            <person name="Heidelberg J.F."/>
            <person name="Read T.D."/>
            <person name="Dodson R.J."/>
            <person name="Umayam L.A."/>
            <person name="Brinkac L.M."/>
            <person name="Beanan M.J."/>
            <person name="Daugherty S.C."/>
            <person name="DeBoy R.T."/>
            <person name="Durkin A.S."/>
            <person name="Kolonay J.F."/>
            <person name="Madupu R."/>
            <person name="Nelson W.C."/>
            <person name="Ayodeji B."/>
            <person name="Kraul M."/>
            <person name="Shetty J."/>
            <person name="Malek J.A."/>
            <person name="Van Aken S.E."/>
            <person name="Riedmuller S."/>
            <person name="Tettelin H."/>
            <person name="Gill S.R."/>
            <person name="White O."/>
            <person name="Salzberg S.L."/>
            <person name="Hoover D.L."/>
            <person name="Lindler L.E."/>
            <person name="Halling S.M."/>
            <person name="Boyle S.M."/>
            <person name="Fraser C.M."/>
        </authorList>
    </citation>
    <scope>NUCLEOTIDE SEQUENCE [LARGE SCALE GENOMIC DNA]</scope>
    <source>
        <strain>1330</strain>
    </source>
</reference>
<reference key="2">
    <citation type="journal article" date="2011" name="J. Bacteriol.">
        <title>Revised genome sequence of Brucella suis 1330.</title>
        <authorList>
            <person name="Tae H."/>
            <person name="Shallom S."/>
            <person name="Settlage R."/>
            <person name="Preston D."/>
            <person name="Adams L.G."/>
            <person name="Garner H.R."/>
        </authorList>
    </citation>
    <scope>NUCLEOTIDE SEQUENCE [LARGE SCALE GENOMIC DNA]</scope>
    <source>
        <strain>1330</strain>
    </source>
</reference>
<gene>
    <name evidence="1" type="primary">pgk</name>
    <name type="ordered locus">BR1729</name>
    <name type="ordered locus">BS1330_I1723</name>
</gene>
<keyword id="KW-0067">ATP-binding</keyword>
<keyword id="KW-0963">Cytoplasm</keyword>
<keyword id="KW-0324">Glycolysis</keyword>
<keyword id="KW-0418">Kinase</keyword>
<keyword id="KW-0547">Nucleotide-binding</keyword>
<keyword id="KW-0808">Transferase</keyword>
<protein>
    <recommendedName>
        <fullName evidence="1">Phosphoglycerate kinase</fullName>
        <ecNumber evidence="1">2.7.2.3</ecNumber>
    </recommendedName>
</protein>
<sequence length="395" mass="41737">MFRTLDDANVQSKRVLVRIDLNVPMANGEVTDLTRIERIVPTIAELSRKGAKVILLAHFGRPKGVASDENSLKHVVKPLSKVLDHSVHFAEDCIGDKAKAAVDALKDGDVLLLENTRFHKGEEKNDPEFVQALAANGDLYVNDAFSAAHRAHASTEGLAHVLPAFAGRAMQAELEALEKGLGNPARPVVAIVGGAKVSTKLDLLSNLIEKVDALVIGGGMANTFLAAKGLDVGKSLCEHELASTAREIMAKAETTKCAIILPVDAVVGWHFAADTPHQTYGVDSVPGDAMILDAGELSTDLIASAIDDAATLVWNGPLGAFELRPFDTATVKVARHVAKRTKEGKLVSVGGGGDTVAALNHAGVVDDFTYISTAGGAFLEWMEGKPLPSVDVLKK</sequence>
<proteinExistence type="inferred from homology"/>
<feature type="chain" id="PRO_0000145917" description="Phosphoglycerate kinase">
    <location>
        <begin position="1"/>
        <end position="395"/>
    </location>
</feature>
<feature type="binding site" evidence="1">
    <location>
        <begin position="20"/>
        <end position="22"/>
    </location>
    <ligand>
        <name>substrate</name>
    </ligand>
</feature>
<feature type="binding site" evidence="1">
    <location>
        <position position="35"/>
    </location>
    <ligand>
        <name>substrate</name>
    </ligand>
</feature>
<feature type="binding site" evidence="1">
    <location>
        <begin position="58"/>
        <end position="61"/>
    </location>
    <ligand>
        <name>substrate</name>
    </ligand>
</feature>
<feature type="binding site" evidence="1">
    <location>
        <position position="117"/>
    </location>
    <ligand>
        <name>substrate</name>
    </ligand>
</feature>
<feature type="binding site" evidence="1">
    <location>
        <position position="150"/>
    </location>
    <ligand>
        <name>substrate</name>
    </ligand>
</feature>
<feature type="binding site" evidence="1">
    <location>
        <position position="200"/>
    </location>
    <ligand>
        <name>ATP</name>
        <dbReference type="ChEBI" id="CHEBI:30616"/>
    </ligand>
</feature>
<feature type="binding site" evidence="1">
    <location>
        <position position="322"/>
    </location>
    <ligand>
        <name>ATP</name>
        <dbReference type="ChEBI" id="CHEBI:30616"/>
    </ligand>
</feature>
<feature type="binding site" evidence="1">
    <location>
        <begin position="352"/>
        <end position="355"/>
    </location>
    <ligand>
        <name>ATP</name>
        <dbReference type="ChEBI" id="CHEBI:30616"/>
    </ligand>
</feature>
<name>PGK_BRUSU</name>